<sequence length="205" mass="23180">MFEYVTGYVEYVGPEYVVIDHNGIGYQIFTPNPYVFQRSKQEIRVYTYHYVREDIMALYGFKTREERLLFTKLLGVSGIGPKGALAILASGQTGQVVQAIEHEDEKFLVKFPGVGKKTARQMILDLKGKLADVVPDAFVDLFSDTERFDEKKGTSAELDEALEALRALGYAEREVSRVVPELLKESLTTDQYIKKALSLLLNGKR</sequence>
<dbReference type="EMBL" id="CP001186">
    <property type="protein sequence ID" value="ACK95010.1"/>
    <property type="molecule type" value="Genomic_DNA"/>
</dbReference>
<dbReference type="RefSeq" id="WP_000464512.1">
    <property type="nucleotide sequence ID" value="NC_011772.1"/>
</dbReference>
<dbReference type="SMR" id="B7IIT3"/>
<dbReference type="KEGG" id="bcg:BCG9842_B0695"/>
<dbReference type="HOGENOM" id="CLU_087936_1_0_9"/>
<dbReference type="Proteomes" id="UP000006744">
    <property type="component" value="Chromosome"/>
</dbReference>
<dbReference type="GO" id="GO:0005737">
    <property type="term" value="C:cytoplasm"/>
    <property type="evidence" value="ECO:0007669"/>
    <property type="project" value="UniProtKB-SubCell"/>
</dbReference>
<dbReference type="GO" id="GO:0009379">
    <property type="term" value="C:Holliday junction helicase complex"/>
    <property type="evidence" value="ECO:0007669"/>
    <property type="project" value="InterPro"/>
</dbReference>
<dbReference type="GO" id="GO:0048476">
    <property type="term" value="C:Holliday junction resolvase complex"/>
    <property type="evidence" value="ECO:0007669"/>
    <property type="project" value="UniProtKB-UniRule"/>
</dbReference>
<dbReference type="GO" id="GO:0005524">
    <property type="term" value="F:ATP binding"/>
    <property type="evidence" value="ECO:0007669"/>
    <property type="project" value="InterPro"/>
</dbReference>
<dbReference type="GO" id="GO:0000400">
    <property type="term" value="F:four-way junction DNA binding"/>
    <property type="evidence" value="ECO:0007669"/>
    <property type="project" value="UniProtKB-UniRule"/>
</dbReference>
<dbReference type="GO" id="GO:0009378">
    <property type="term" value="F:four-way junction helicase activity"/>
    <property type="evidence" value="ECO:0007669"/>
    <property type="project" value="InterPro"/>
</dbReference>
<dbReference type="GO" id="GO:0006310">
    <property type="term" value="P:DNA recombination"/>
    <property type="evidence" value="ECO:0007669"/>
    <property type="project" value="UniProtKB-UniRule"/>
</dbReference>
<dbReference type="GO" id="GO:0006281">
    <property type="term" value="P:DNA repair"/>
    <property type="evidence" value="ECO:0007669"/>
    <property type="project" value="UniProtKB-UniRule"/>
</dbReference>
<dbReference type="CDD" id="cd14332">
    <property type="entry name" value="UBA_RuvA_C"/>
    <property type="match status" value="1"/>
</dbReference>
<dbReference type="Gene3D" id="1.10.150.20">
    <property type="entry name" value="5' to 3' exonuclease, C-terminal subdomain"/>
    <property type="match status" value="1"/>
</dbReference>
<dbReference type="Gene3D" id="1.10.8.10">
    <property type="entry name" value="DNA helicase RuvA subunit, C-terminal domain"/>
    <property type="match status" value="1"/>
</dbReference>
<dbReference type="Gene3D" id="2.40.50.140">
    <property type="entry name" value="Nucleic acid-binding proteins"/>
    <property type="match status" value="1"/>
</dbReference>
<dbReference type="HAMAP" id="MF_00031">
    <property type="entry name" value="DNA_HJ_migration_RuvA"/>
    <property type="match status" value="1"/>
</dbReference>
<dbReference type="InterPro" id="IPR013849">
    <property type="entry name" value="DNA_helicase_Holl-junc_RuvA_I"/>
</dbReference>
<dbReference type="InterPro" id="IPR003583">
    <property type="entry name" value="Hlx-hairpin-Hlx_DNA-bd_motif"/>
</dbReference>
<dbReference type="InterPro" id="IPR012340">
    <property type="entry name" value="NA-bd_OB-fold"/>
</dbReference>
<dbReference type="InterPro" id="IPR000085">
    <property type="entry name" value="RuvA"/>
</dbReference>
<dbReference type="InterPro" id="IPR010994">
    <property type="entry name" value="RuvA_2-like"/>
</dbReference>
<dbReference type="InterPro" id="IPR011114">
    <property type="entry name" value="RuvA_C"/>
</dbReference>
<dbReference type="InterPro" id="IPR036267">
    <property type="entry name" value="RuvA_C_sf"/>
</dbReference>
<dbReference type="NCBIfam" id="TIGR00084">
    <property type="entry name" value="ruvA"/>
    <property type="match status" value="1"/>
</dbReference>
<dbReference type="Pfam" id="PF14520">
    <property type="entry name" value="HHH_5"/>
    <property type="match status" value="1"/>
</dbReference>
<dbReference type="Pfam" id="PF07499">
    <property type="entry name" value="RuvA_C"/>
    <property type="match status" value="1"/>
</dbReference>
<dbReference type="Pfam" id="PF01330">
    <property type="entry name" value="RuvA_N"/>
    <property type="match status" value="1"/>
</dbReference>
<dbReference type="SMART" id="SM00278">
    <property type="entry name" value="HhH1"/>
    <property type="match status" value="2"/>
</dbReference>
<dbReference type="SUPFAM" id="SSF46929">
    <property type="entry name" value="DNA helicase RuvA subunit, C-terminal domain"/>
    <property type="match status" value="1"/>
</dbReference>
<dbReference type="SUPFAM" id="SSF50249">
    <property type="entry name" value="Nucleic acid-binding proteins"/>
    <property type="match status" value="1"/>
</dbReference>
<dbReference type="SUPFAM" id="SSF47781">
    <property type="entry name" value="RuvA domain 2-like"/>
    <property type="match status" value="1"/>
</dbReference>
<feature type="chain" id="PRO_1000195118" description="Holliday junction branch migration complex subunit RuvA">
    <location>
        <begin position="1"/>
        <end position="205"/>
    </location>
</feature>
<feature type="region of interest" description="Domain I" evidence="1">
    <location>
        <begin position="1"/>
        <end position="62"/>
    </location>
</feature>
<feature type="region of interest" description="Domain II" evidence="1">
    <location>
        <begin position="63"/>
        <end position="141"/>
    </location>
</feature>
<feature type="region of interest" description="Flexible linker" evidence="1">
    <location>
        <begin position="142"/>
        <end position="152"/>
    </location>
</feature>
<feature type="region of interest" description="Domain III" evidence="1">
    <location>
        <begin position="153"/>
        <end position="205"/>
    </location>
</feature>
<reference key="1">
    <citation type="submission" date="2008-10" db="EMBL/GenBank/DDBJ databases">
        <title>Genome sequence of Bacillus cereus G9842.</title>
        <authorList>
            <person name="Dodson R.J."/>
            <person name="Durkin A.S."/>
            <person name="Rosovitz M.J."/>
            <person name="Rasko D.A."/>
            <person name="Hoffmaster A."/>
            <person name="Ravel J."/>
            <person name="Sutton G."/>
        </authorList>
    </citation>
    <scope>NUCLEOTIDE SEQUENCE [LARGE SCALE GENOMIC DNA]</scope>
    <source>
        <strain>G9842</strain>
    </source>
</reference>
<keyword id="KW-0963">Cytoplasm</keyword>
<keyword id="KW-0227">DNA damage</keyword>
<keyword id="KW-0233">DNA recombination</keyword>
<keyword id="KW-0234">DNA repair</keyword>
<keyword id="KW-0238">DNA-binding</keyword>
<accession>B7IIT3</accession>
<gene>
    <name evidence="1" type="primary">ruvA</name>
    <name type="ordered locus">BCG9842_B0695</name>
</gene>
<organism>
    <name type="scientific">Bacillus cereus (strain G9842)</name>
    <dbReference type="NCBI Taxonomy" id="405531"/>
    <lineage>
        <taxon>Bacteria</taxon>
        <taxon>Bacillati</taxon>
        <taxon>Bacillota</taxon>
        <taxon>Bacilli</taxon>
        <taxon>Bacillales</taxon>
        <taxon>Bacillaceae</taxon>
        <taxon>Bacillus</taxon>
        <taxon>Bacillus cereus group</taxon>
    </lineage>
</organism>
<protein>
    <recommendedName>
        <fullName evidence="1">Holliday junction branch migration complex subunit RuvA</fullName>
    </recommendedName>
</protein>
<proteinExistence type="inferred from homology"/>
<comment type="function">
    <text evidence="1">The RuvA-RuvB-RuvC complex processes Holliday junction (HJ) DNA during genetic recombination and DNA repair, while the RuvA-RuvB complex plays an important role in the rescue of blocked DNA replication forks via replication fork reversal (RFR). RuvA specifically binds to HJ cruciform DNA, conferring on it an open structure. The RuvB hexamer acts as an ATP-dependent pump, pulling dsDNA into and through the RuvAB complex. HJ branch migration allows RuvC to scan DNA until it finds its consensus sequence, where it cleaves and resolves the cruciform DNA.</text>
</comment>
<comment type="subunit">
    <text evidence="1">Homotetramer. Forms an RuvA(8)-RuvB(12)-Holliday junction (HJ) complex. HJ DNA is sandwiched between 2 RuvA tetramers; dsDNA enters through RuvA and exits via RuvB. An RuvB hexamer assembles on each DNA strand where it exits the tetramer. Each RuvB hexamer is contacted by two RuvA subunits (via domain III) on 2 adjacent RuvB subunits; this complex drives branch migration. In the full resolvosome a probable DNA-RuvA(4)-RuvB(12)-RuvC(2) complex forms which resolves the HJ.</text>
</comment>
<comment type="subcellular location">
    <subcellularLocation>
        <location evidence="1">Cytoplasm</location>
    </subcellularLocation>
</comment>
<comment type="domain">
    <text evidence="1">Has three domains with a flexible linker between the domains II and III and assumes an 'L' shape. Domain III is highly mobile and contacts RuvB.</text>
</comment>
<comment type="similarity">
    <text evidence="1">Belongs to the RuvA family.</text>
</comment>
<evidence type="ECO:0000255" key="1">
    <source>
        <dbReference type="HAMAP-Rule" id="MF_00031"/>
    </source>
</evidence>
<name>RUVA_BACC2</name>